<proteinExistence type="inferred from homology"/>
<sequence length="341" mass="38051">MTKPTILTGDRPTGKLHIGHYVGSLQNRVKMQNEDKYNMFVFLADQQALTDHAKEPELIRQSVGDVALDYLAAGLDPEKSTIFIQSQIPELAELSMYYMNLVSLARLERNPTVKTEIAQKAFGESIPAGFLVYPVSQAADITAFKATHVPVGNDQKPMIEQTREIVRSFNNAYHTDVLVEPEGIYPENEAAGRLPGLDGNAKMSKSLGNGIFLADDMDTLKKKVMSMYTDPDHIKVEDPGKIEGNMVFHYLDVFGKAEDAEQISEMKAQYQAGGLGDVKTKRFLLDVLDRELSPIRERRIEFAQNMDYVYDMLKAGSLKAQAVASQTLDEVKSAMGINYFK</sequence>
<accession>Q9CJD1</accession>
<dbReference type="EC" id="6.1.1.2" evidence="1"/>
<dbReference type="EMBL" id="AE005176">
    <property type="protein sequence ID" value="AAK04164.1"/>
    <property type="molecule type" value="Genomic_DNA"/>
</dbReference>
<dbReference type="PIR" id="B86633">
    <property type="entry name" value="B86633"/>
</dbReference>
<dbReference type="RefSeq" id="NP_266222.1">
    <property type="nucleotide sequence ID" value="NC_002662.1"/>
</dbReference>
<dbReference type="RefSeq" id="WP_010905081.1">
    <property type="nucleotide sequence ID" value="NC_002662.1"/>
</dbReference>
<dbReference type="SMR" id="Q9CJD1"/>
<dbReference type="PaxDb" id="272623-L0358"/>
<dbReference type="EnsemblBacteria" id="AAK04164">
    <property type="protein sequence ID" value="AAK04164"/>
    <property type="gene ID" value="L0358"/>
</dbReference>
<dbReference type="KEGG" id="lla:L0358"/>
<dbReference type="PATRIC" id="fig|272623.7.peg.71"/>
<dbReference type="eggNOG" id="COG0180">
    <property type="taxonomic scope" value="Bacteria"/>
</dbReference>
<dbReference type="HOGENOM" id="CLU_029244_0_1_9"/>
<dbReference type="OrthoDB" id="9801042at2"/>
<dbReference type="Proteomes" id="UP000002196">
    <property type="component" value="Chromosome"/>
</dbReference>
<dbReference type="GO" id="GO:0005829">
    <property type="term" value="C:cytosol"/>
    <property type="evidence" value="ECO:0007669"/>
    <property type="project" value="TreeGrafter"/>
</dbReference>
<dbReference type="GO" id="GO:0005524">
    <property type="term" value="F:ATP binding"/>
    <property type="evidence" value="ECO:0007669"/>
    <property type="project" value="UniProtKB-UniRule"/>
</dbReference>
<dbReference type="GO" id="GO:0004830">
    <property type="term" value="F:tryptophan-tRNA ligase activity"/>
    <property type="evidence" value="ECO:0007669"/>
    <property type="project" value="UniProtKB-UniRule"/>
</dbReference>
<dbReference type="GO" id="GO:0006436">
    <property type="term" value="P:tryptophanyl-tRNA aminoacylation"/>
    <property type="evidence" value="ECO:0007669"/>
    <property type="project" value="UniProtKB-UniRule"/>
</dbReference>
<dbReference type="CDD" id="cd00806">
    <property type="entry name" value="TrpRS_core"/>
    <property type="match status" value="1"/>
</dbReference>
<dbReference type="FunFam" id="1.10.240.10:FF:000005">
    <property type="entry name" value="Tryptophan--tRNA ligase"/>
    <property type="match status" value="1"/>
</dbReference>
<dbReference type="FunFam" id="3.40.50.620:FF:000094">
    <property type="entry name" value="Tryptophan--tRNA ligase"/>
    <property type="match status" value="1"/>
</dbReference>
<dbReference type="Gene3D" id="3.40.50.620">
    <property type="entry name" value="HUPs"/>
    <property type="match status" value="1"/>
</dbReference>
<dbReference type="Gene3D" id="1.10.240.10">
    <property type="entry name" value="Tyrosyl-Transfer RNA Synthetase"/>
    <property type="match status" value="1"/>
</dbReference>
<dbReference type="HAMAP" id="MF_00140_B">
    <property type="entry name" value="Trp_tRNA_synth_B"/>
    <property type="match status" value="1"/>
</dbReference>
<dbReference type="InterPro" id="IPR001412">
    <property type="entry name" value="aa-tRNA-synth_I_CS"/>
</dbReference>
<dbReference type="InterPro" id="IPR002305">
    <property type="entry name" value="aa-tRNA-synth_Ic"/>
</dbReference>
<dbReference type="InterPro" id="IPR014729">
    <property type="entry name" value="Rossmann-like_a/b/a_fold"/>
</dbReference>
<dbReference type="InterPro" id="IPR002306">
    <property type="entry name" value="Trp-tRNA-ligase"/>
</dbReference>
<dbReference type="InterPro" id="IPR024109">
    <property type="entry name" value="Trp-tRNA-ligase_bac-type"/>
</dbReference>
<dbReference type="InterPro" id="IPR050203">
    <property type="entry name" value="Trp-tRNA_synthetase"/>
</dbReference>
<dbReference type="NCBIfam" id="TIGR00233">
    <property type="entry name" value="trpS"/>
    <property type="match status" value="1"/>
</dbReference>
<dbReference type="PANTHER" id="PTHR43766">
    <property type="entry name" value="TRYPTOPHAN--TRNA LIGASE, MITOCHONDRIAL"/>
    <property type="match status" value="1"/>
</dbReference>
<dbReference type="PANTHER" id="PTHR43766:SF1">
    <property type="entry name" value="TRYPTOPHAN--TRNA LIGASE, MITOCHONDRIAL"/>
    <property type="match status" value="1"/>
</dbReference>
<dbReference type="Pfam" id="PF00579">
    <property type="entry name" value="tRNA-synt_1b"/>
    <property type="match status" value="1"/>
</dbReference>
<dbReference type="PRINTS" id="PR01039">
    <property type="entry name" value="TRNASYNTHTRP"/>
</dbReference>
<dbReference type="SUPFAM" id="SSF52374">
    <property type="entry name" value="Nucleotidylyl transferase"/>
    <property type="match status" value="1"/>
</dbReference>
<dbReference type="PROSITE" id="PS00178">
    <property type="entry name" value="AA_TRNA_LIGASE_I"/>
    <property type="match status" value="1"/>
</dbReference>
<protein>
    <recommendedName>
        <fullName evidence="1">Tryptophan--tRNA ligase</fullName>
        <ecNumber evidence="1">6.1.1.2</ecNumber>
    </recommendedName>
    <alternativeName>
        <fullName evidence="1">Tryptophanyl-tRNA synthetase</fullName>
        <shortName evidence="1">TrpRS</shortName>
    </alternativeName>
</protein>
<comment type="function">
    <text evidence="1">Catalyzes the attachment of tryptophan to tRNA(Trp).</text>
</comment>
<comment type="catalytic activity">
    <reaction evidence="1">
        <text>tRNA(Trp) + L-tryptophan + ATP = L-tryptophyl-tRNA(Trp) + AMP + diphosphate + H(+)</text>
        <dbReference type="Rhea" id="RHEA:24080"/>
        <dbReference type="Rhea" id="RHEA-COMP:9671"/>
        <dbReference type="Rhea" id="RHEA-COMP:9705"/>
        <dbReference type="ChEBI" id="CHEBI:15378"/>
        <dbReference type="ChEBI" id="CHEBI:30616"/>
        <dbReference type="ChEBI" id="CHEBI:33019"/>
        <dbReference type="ChEBI" id="CHEBI:57912"/>
        <dbReference type="ChEBI" id="CHEBI:78442"/>
        <dbReference type="ChEBI" id="CHEBI:78535"/>
        <dbReference type="ChEBI" id="CHEBI:456215"/>
        <dbReference type="EC" id="6.1.1.2"/>
    </reaction>
</comment>
<comment type="subunit">
    <text evidence="1">Homodimer.</text>
</comment>
<comment type="subcellular location">
    <subcellularLocation>
        <location evidence="1">Cytoplasm</location>
    </subcellularLocation>
</comment>
<comment type="similarity">
    <text evidence="1">Belongs to the class-I aminoacyl-tRNA synthetase family.</text>
</comment>
<name>SYW_LACLA</name>
<organism>
    <name type="scientific">Lactococcus lactis subsp. lactis (strain IL1403)</name>
    <name type="common">Streptococcus lactis</name>
    <dbReference type="NCBI Taxonomy" id="272623"/>
    <lineage>
        <taxon>Bacteria</taxon>
        <taxon>Bacillati</taxon>
        <taxon>Bacillota</taxon>
        <taxon>Bacilli</taxon>
        <taxon>Lactobacillales</taxon>
        <taxon>Streptococcaceae</taxon>
        <taxon>Lactococcus</taxon>
    </lineage>
</organism>
<reference key="1">
    <citation type="journal article" date="2001" name="Genome Res.">
        <title>The complete genome sequence of the lactic acid bacterium Lactococcus lactis ssp. lactis IL1403.</title>
        <authorList>
            <person name="Bolotin A."/>
            <person name="Wincker P."/>
            <person name="Mauger S."/>
            <person name="Jaillon O."/>
            <person name="Malarme K."/>
            <person name="Weissenbach J."/>
            <person name="Ehrlich S.D."/>
            <person name="Sorokin A."/>
        </authorList>
    </citation>
    <scope>NUCLEOTIDE SEQUENCE [LARGE SCALE GENOMIC DNA]</scope>
    <source>
        <strain>IL1403</strain>
    </source>
</reference>
<gene>
    <name evidence="1" type="primary">trpS</name>
    <name type="ordered locus">LL0066</name>
    <name type="ORF">L0358</name>
</gene>
<evidence type="ECO:0000255" key="1">
    <source>
        <dbReference type="HAMAP-Rule" id="MF_00140"/>
    </source>
</evidence>
<feature type="chain" id="PRO_0000136640" description="Tryptophan--tRNA ligase">
    <location>
        <begin position="1"/>
        <end position="341"/>
    </location>
</feature>
<feature type="short sequence motif" description="'HIGH' region" evidence="1">
    <location>
        <begin position="12"/>
        <end position="20"/>
    </location>
</feature>
<feature type="short sequence motif" description="'KMSKS' region" evidence="1">
    <location>
        <begin position="202"/>
        <end position="206"/>
    </location>
</feature>
<feature type="binding site" evidence="1">
    <location>
        <begin position="11"/>
        <end position="13"/>
    </location>
    <ligand>
        <name>ATP</name>
        <dbReference type="ChEBI" id="CHEBI:30616"/>
    </ligand>
</feature>
<feature type="binding site" evidence="1">
    <location>
        <begin position="19"/>
        <end position="20"/>
    </location>
    <ligand>
        <name>ATP</name>
        <dbReference type="ChEBI" id="CHEBI:30616"/>
    </ligand>
</feature>
<feature type="binding site" evidence="1">
    <location>
        <position position="140"/>
    </location>
    <ligand>
        <name>L-tryptophan</name>
        <dbReference type="ChEBI" id="CHEBI:57912"/>
    </ligand>
</feature>
<feature type="binding site" evidence="1">
    <location>
        <begin position="152"/>
        <end position="154"/>
    </location>
    <ligand>
        <name>ATP</name>
        <dbReference type="ChEBI" id="CHEBI:30616"/>
    </ligand>
</feature>
<feature type="binding site" evidence="1">
    <location>
        <position position="194"/>
    </location>
    <ligand>
        <name>ATP</name>
        <dbReference type="ChEBI" id="CHEBI:30616"/>
    </ligand>
</feature>
<feature type="binding site" evidence="1">
    <location>
        <begin position="202"/>
        <end position="206"/>
    </location>
    <ligand>
        <name>ATP</name>
        <dbReference type="ChEBI" id="CHEBI:30616"/>
    </ligand>
</feature>
<keyword id="KW-0030">Aminoacyl-tRNA synthetase</keyword>
<keyword id="KW-0067">ATP-binding</keyword>
<keyword id="KW-0963">Cytoplasm</keyword>
<keyword id="KW-0436">Ligase</keyword>
<keyword id="KW-0547">Nucleotide-binding</keyword>
<keyword id="KW-0648">Protein biosynthesis</keyword>
<keyword id="KW-1185">Reference proteome</keyword>